<reference key="1">
    <citation type="journal article" date="2009" name="J. Bacteriol.">
        <title>Complete genome sequence of Rhodobacter sphaeroides KD131.</title>
        <authorList>
            <person name="Lim S.-K."/>
            <person name="Kim S.J."/>
            <person name="Cha S.H."/>
            <person name="Oh Y.-K."/>
            <person name="Rhee H.-J."/>
            <person name="Kim M.-S."/>
            <person name="Lee J.K."/>
        </authorList>
    </citation>
    <scope>NUCLEOTIDE SEQUENCE [LARGE SCALE GENOMIC DNA]</scope>
    <source>
        <strain>KD131 / KCTC 12085</strain>
    </source>
</reference>
<gene>
    <name evidence="1" type="primary">dapE</name>
    <name type="ordered locus">RSKD131_2524</name>
</gene>
<dbReference type="EC" id="3.5.1.18" evidence="1"/>
<dbReference type="EMBL" id="CP001150">
    <property type="protein sequence ID" value="ACM02384.1"/>
    <property type="molecule type" value="Genomic_DNA"/>
</dbReference>
<dbReference type="RefSeq" id="WP_015921478.1">
    <property type="nucleotide sequence ID" value="NC_011963.1"/>
</dbReference>
<dbReference type="SMR" id="B9KP62"/>
<dbReference type="GeneID" id="67447902"/>
<dbReference type="KEGG" id="rsk:RSKD131_2524"/>
<dbReference type="HOGENOM" id="CLU_021802_4_0_5"/>
<dbReference type="UniPathway" id="UPA00034">
    <property type="reaction ID" value="UER00021"/>
</dbReference>
<dbReference type="GO" id="GO:0008777">
    <property type="term" value="F:acetylornithine deacetylase activity"/>
    <property type="evidence" value="ECO:0007669"/>
    <property type="project" value="TreeGrafter"/>
</dbReference>
<dbReference type="GO" id="GO:0050897">
    <property type="term" value="F:cobalt ion binding"/>
    <property type="evidence" value="ECO:0007669"/>
    <property type="project" value="UniProtKB-UniRule"/>
</dbReference>
<dbReference type="GO" id="GO:0009014">
    <property type="term" value="F:succinyl-diaminopimelate desuccinylase activity"/>
    <property type="evidence" value="ECO:0007669"/>
    <property type="project" value="UniProtKB-UniRule"/>
</dbReference>
<dbReference type="GO" id="GO:0008270">
    <property type="term" value="F:zinc ion binding"/>
    <property type="evidence" value="ECO:0007669"/>
    <property type="project" value="UniProtKB-UniRule"/>
</dbReference>
<dbReference type="GO" id="GO:0019877">
    <property type="term" value="P:diaminopimelate biosynthetic process"/>
    <property type="evidence" value="ECO:0007669"/>
    <property type="project" value="UniProtKB-UniRule"/>
</dbReference>
<dbReference type="GO" id="GO:0006526">
    <property type="term" value="P:L-arginine biosynthetic process"/>
    <property type="evidence" value="ECO:0007669"/>
    <property type="project" value="TreeGrafter"/>
</dbReference>
<dbReference type="GO" id="GO:0009089">
    <property type="term" value="P:lysine biosynthetic process via diaminopimelate"/>
    <property type="evidence" value="ECO:0007669"/>
    <property type="project" value="UniProtKB-UniRule"/>
</dbReference>
<dbReference type="CDD" id="cd03891">
    <property type="entry name" value="M20_DapE_proteobac"/>
    <property type="match status" value="1"/>
</dbReference>
<dbReference type="Gene3D" id="3.30.70.360">
    <property type="match status" value="1"/>
</dbReference>
<dbReference type="Gene3D" id="3.40.630.10">
    <property type="entry name" value="Zn peptidases"/>
    <property type="match status" value="1"/>
</dbReference>
<dbReference type="HAMAP" id="MF_01690">
    <property type="entry name" value="DapE"/>
    <property type="match status" value="1"/>
</dbReference>
<dbReference type="InterPro" id="IPR001261">
    <property type="entry name" value="ArgE/DapE_CS"/>
</dbReference>
<dbReference type="InterPro" id="IPR036264">
    <property type="entry name" value="Bact_exopeptidase_dim_dom"/>
</dbReference>
<dbReference type="InterPro" id="IPR005941">
    <property type="entry name" value="DapE_proteobac"/>
</dbReference>
<dbReference type="InterPro" id="IPR002933">
    <property type="entry name" value="Peptidase_M20"/>
</dbReference>
<dbReference type="InterPro" id="IPR011650">
    <property type="entry name" value="Peptidase_M20_dimer"/>
</dbReference>
<dbReference type="InterPro" id="IPR050072">
    <property type="entry name" value="Peptidase_M20A"/>
</dbReference>
<dbReference type="NCBIfam" id="TIGR01246">
    <property type="entry name" value="dapE_proteo"/>
    <property type="match status" value="1"/>
</dbReference>
<dbReference type="NCBIfam" id="NF009557">
    <property type="entry name" value="PRK13009.1"/>
    <property type="match status" value="1"/>
</dbReference>
<dbReference type="PANTHER" id="PTHR43808">
    <property type="entry name" value="ACETYLORNITHINE DEACETYLASE"/>
    <property type="match status" value="1"/>
</dbReference>
<dbReference type="PANTHER" id="PTHR43808:SF31">
    <property type="entry name" value="N-ACETYL-L-CITRULLINE DEACETYLASE"/>
    <property type="match status" value="1"/>
</dbReference>
<dbReference type="Pfam" id="PF07687">
    <property type="entry name" value="M20_dimer"/>
    <property type="match status" value="1"/>
</dbReference>
<dbReference type="Pfam" id="PF01546">
    <property type="entry name" value="Peptidase_M20"/>
    <property type="match status" value="1"/>
</dbReference>
<dbReference type="SUPFAM" id="SSF55031">
    <property type="entry name" value="Bacterial exopeptidase dimerisation domain"/>
    <property type="match status" value="1"/>
</dbReference>
<dbReference type="SUPFAM" id="SSF53187">
    <property type="entry name" value="Zn-dependent exopeptidases"/>
    <property type="match status" value="1"/>
</dbReference>
<dbReference type="PROSITE" id="PS00759">
    <property type="entry name" value="ARGE_DAPE_CPG2_2"/>
    <property type="match status" value="1"/>
</dbReference>
<sequence>MPIDPVALTADLVRCPSVTPEEGGALDLIERILSGAGFDCTRVDRNGVPNLFARWGRKGANRTFGFNGHTDVVPVGDAAAWTRDPFGGEIADGWLWGRGATDMKSGVAAFVAAAVDFVQETPPDGAVVLTITGDEEGDAADGTVALLDWMAAEGEAMSVCLVGEPTCPERLGEMMKIGRRGSMTAFFTARGVQGHSAYPHRAKNPVAALARLIDRLSSHDLDRGTEHFDASTLAVTTFDTGNPATNVIPALCRATVNIRFNDAHSGASLTRWLEEEAARVTAETGVEIALSAKISGESFLTPPGELSELVARAVEAETGLRPEPSTSGGTSDARFVRAHCPVVEFGLVGKTMHQVDERVEVGQIEPLKAIYLRILKDYFA</sequence>
<comment type="function">
    <text evidence="1">Catalyzes the hydrolysis of N-succinyl-L,L-diaminopimelic acid (SDAP), forming succinate and LL-2,6-diaminopimelate (DAP), an intermediate involved in the bacterial biosynthesis of lysine and meso-diaminopimelic acid, an essential component of bacterial cell walls.</text>
</comment>
<comment type="catalytic activity">
    <reaction evidence="1">
        <text>N-succinyl-(2S,6S)-2,6-diaminopimelate + H2O = (2S,6S)-2,6-diaminopimelate + succinate</text>
        <dbReference type="Rhea" id="RHEA:22608"/>
        <dbReference type="ChEBI" id="CHEBI:15377"/>
        <dbReference type="ChEBI" id="CHEBI:30031"/>
        <dbReference type="ChEBI" id="CHEBI:57609"/>
        <dbReference type="ChEBI" id="CHEBI:58087"/>
        <dbReference type="EC" id="3.5.1.18"/>
    </reaction>
</comment>
<comment type="cofactor">
    <cofactor evidence="1">
        <name>Zn(2+)</name>
        <dbReference type="ChEBI" id="CHEBI:29105"/>
    </cofactor>
    <cofactor evidence="1">
        <name>Co(2+)</name>
        <dbReference type="ChEBI" id="CHEBI:48828"/>
    </cofactor>
    <text evidence="1">Binds 2 Zn(2+) or Co(2+) ions per subunit.</text>
</comment>
<comment type="pathway">
    <text evidence="1">Amino-acid biosynthesis; L-lysine biosynthesis via DAP pathway; LL-2,6-diaminopimelate from (S)-tetrahydrodipicolinate (succinylase route): step 3/3.</text>
</comment>
<comment type="subunit">
    <text evidence="1">Homodimer.</text>
</comment>
<comment type="similarity">
    <text evidence="1">Belongs to the peptidase M20A family. DapE subfamily.</text>
</comment>
<protein>
    <recommendedName>
        <fullName evidence="1">Succinyl-diaminopimelate desuccinylase</fullName>
        <shortName evidence="1">SDAP desuccinylase</shortName>
        <ecNumber evidence="1">3.5.1.18</ecNumber>
    </recommendedName>
    <alternativeName>
        <fullName evidence="1">N-succinyl-LL-2,6-diaminoheptanedioate amidohydrolase</fullName>
    </alternativeName>
</protein>
<keyword id="KW-0028">Amino-acid biosynthesis</keyword>
<keyword id="KW-0170">Cobalt</keyword>
<keyword id="KW-0220">Diaminopimelate biosynthesis</keyword>
<keyword id="KW-0378">Hydrolase</keyword>
<keyword id="KW-0457">Lysine biosynthesis</keyword>
<keyword id="KW-0479">Metal-binding</keyword>
<keyword id="KW-0862">Zinc</keyword>
<feature type="chain" id="PRO_0000375687" description="Succinyl-diaminopimelate desuccinylase">
    <location>
        <begin position="1"/>
        <end position="380"/>
    </location>
</feature>
<feature type="active site" evidence="1">
    <location>
        <position position="71"/>
    </location>
</feature>
<feature type="active site" description="Proton acceptor" evidence="1">
    <location>
        <position position="135"/>
    </location>
</feature>
<feature type="binding site" evidence="1">
    <location>
        <position position="69"/>
    </location>
    <ligand>
        <name>Zn(2+)</name>
        <dbReference type="ChEBI" id="CHEBI:29105"/>
        <label>1</label>
    </ligand>
</feature>
<feature type="binding site" evidence="1">
    <location>
        <position position="102"/>
    </location>
    <ligand>
        <name>Zn(2+)</name>
        <dbReference type="ChEBI" id="CHEBI:29105"/>
        <label>1</label>
    </ligand>
</feature>
<feature type="binding site" evidence="1">
    <location>
        <position position="102"/>
    </location>
    <ligand>
        <name>Zn(2+)</name>
        <dbReference type="ChEBI" id="CHEBI:29105"/>
        <label>2</label>
    </ligand>
</feature>
<feature type="binding site" evidence="1">
    <location>
        <position position="136"/>
    </location>
    <ligand>
        <name>Zn(2+)</name>
        <dbReference type="ChEBI" id="CHEBI:29105"/>
        <label>2</label>
    </ligand>
</feature>
<feature type="binding site" evidence="1">
    <location>
        <position position="164"/>
    </location>
    <ligand>
        <name>Zn(2+)</name>
        <dbReference type="ChEBI" id="CHEBI:29105"/>
        <label>1</label>
    </ligand>
</feature>
<feature type="binding site" evidence="1">
    <location>
        <position position="353"/>
    </location>
    <ligand>
        <name>Zn(2+)</name>
        <dbReference type="ChEBI" id="CHEBI:29105"/>
        <label>2</label>
    </ligand>
</feature>
<proteinExistence type="inferred from homology"/>
<organism>
    <name type="scientific">Cereibacter sphaeroides (strain KD131 / KCTC 12085)</name>
    <name type="common">Rhodobacter sphaeroides</name>
    <dbReference type="NCBI Taxonomy" id="557760"/>
    <lineage>
        <taxon>Bacteria</taxon>
        <taxon>Pseudomonadati</taxon>
        <taxon>Pseudomonadota</taxon>
        <taxon>Alphaproteobacteria</taxon>
        <taxon>Rhodobacterales</taxon>
        <taxon>Paracoccaceae</taxon>
        <taxon>Cereibacter</taxon>
    </lineage>
</organism>
<accession>B9KP62</accession>
<name>DAPE_CERSK</name>
<evidence type="ECO:0000255" key="1">
    <source>
        <dbReference type="HAMAP-Rule" id="MF_01690"/>
    </source>
</evidence>